<dbReference type="EC" id="1.2.1.38" evidence="1"/>
<dbReference type="EMBL" id="AM408590">
    <property type="protein sequence ID" value="CAL71678.1"/>
    <property type="molecule type" value="Genomic_DNA"/>
</dbReference>
<dbReference type="RefSeq" id="WP_003898960.1">
    <property type="nucleotide sequence ID" value="NC_008769.1"/>
</dbReference>
<dbReference type="SMR" id="A1KJ69"/>
<dbReference type="GeneID" id="45425622"/>
<dbReference type="KEGG" id="mbb:BCG_1691"/>
<dbReference type="HOGENOM" id="CLU_006384_0_0_11"/>
<dbReference type="UniPathway" id="UPA00068">
    <property type="reaction ID" value="UER00108"/>
</dbReference>
<dbReference type="Proteomes" id="UP000001472">
    <property type="component" value="Chromosome"/>
</dbReference>
<dbReference type="GO" id="GO:0005737">
    <property type="term" value="C:cytoplasm"/>
    <property type="evidence" value="ECO:0007669"/>
    <property type="project" value="UniProtKB-SubCell"/>
</dbReference>
<dbReference type="GO" id="GO:0003942">
    <property type="term" value="F:N-acetyl-gamma-glutamyl-phosphate reductase activity"/>
    <property type="evidence" value="ECO:0007669"/>
    <property type="project" value="UniProtKB-UniRule"/>
</dbReference>
<dbReference type="GO" id="GO:0051287">
    <property type="term" value="F:NAD binding"/>
    <property type="evidence" value="ECO:0007669"/>
    <property type="project" value="InterPro"/>
</dbReference>
<dbReference type="GO" id="GO:0070401">
    <property type="term" value="F:NADP+ binding"/>
    <property type="evidence" value="ECO:0007669"/>
    <property type="project" value="InterPro"/>
</dbReference>
<dbReference type="GO" id="GO:0006526">
    <property type="term" value="P:L-arginine biosynthetic process"/>
    <property type="evidence" value="ECO:0007669"/>
    <property type="project" value="UniProtKB-UniRule"/>
</dbReference>
<dbReference type="CDD" id="cd24148">
    <property type="entry name" value="AGPR_1_actinobacAGPR_like"/>
    <property type="match status" value="1"/>
</dbReference>
<dbReference type="CDD" id="cd23934">
    <property type="entry name" value="AGPR_1_C"/>
    <property type="match status" value="1"/>
</dbReference>
<dbReference type="FunFam" id="3.30.360.10:FF:000014">
    <property type="entry name" value="N-acetyl-gamma-glutamyl-phosphate reductase"/>
    <property type="match status" value="1"/>
</dbReference>
<dbReference type="Gene3D" id="3.30.360.10">
    <property type="entry name" value="Dihydrodipicolinate Reductase, domain 2"/>
    <property type="match status" value="1"/>
</dbReference>
<dbReference type="Gene3D" id="3.40.50.720">
    <property type="entry name" value="NAD(P)-binding Rossmann-like Domain"/>
    <property type="match status" value="1"/>
</dbReference>
<dbReference type="HAMAP" id="MF_00150">
    <property type="entry name" value="ArgC_type1"/>
    <property type="match status" value="1"/>
</dbReference>
<dbReference type="InterPro" id="IPR023013">
    <property type="entry name" value="AGPR_AS"/>
</dbReference>
<dbReference type="InterPro" id="IPR000706">
    <property type="entry name" value="AGPR_type-1"/>
</dbReference>
<dbReference type="InterPro" id="IPR036291">
    <property type="entry name" value="NAD(P)-bd_dom_sf"/>
</dbReference>
<dbReference type="InterPro" id="IPR050085">
    <property type="entry name" value="NAGSA_dehydrogenase"/>
</dbReference>
<dbReference type="InterPro" id="IPR000534">
    <property type="entry name" value="Semialdehyde_DH_NAD-bd"/>
</dbReference>
<dbReference type="NCBIfam" id="TIGR01850">
    <property type="entry name" value="argC"/>
    <property type="match status" value="1"/>
</dbReference>
<dbReference type="PANTHER" id="PTHR32338:SF10">
    <property type="entry name" value="N-ACETYL-GAMMA-GLUTAMYL-PHOSPHATE REDUCTASE, CHLOROPLASTIC-RELATED"/>
    <property type="match status" value="1"/>
</dbReference>
<dbReference type="PANTHER" id="PTHR32338">
    <property type="entry name" value="N-ACETYL-GAMMA-GLUTAMYL-PHOSPHATE REDUCTASE, CHLOROPLASTIC-RELATED-RELATED"/>
    <property type="match status" value="1"/>
</dbReference>
<dbReference type="Pfam" id="PF01118">
    <property type="entry name" value="Semialdhyde_dh"/>
    <property type="match status" value="1"/>
</dbReference>
<dbReference type="Pfam" id="PF22698">
    <property type="entry name" value="Semialdhyde_dhC_1"/>
    <property type="match status" value="1"/>
</dbReference>
<dbReference type="SMART" id="SM00859">
    <property type="entry name" value="Semialdhyde_dh"/>
    <property type="match status" value="1"/>
</dbReference>
<dbReference type="SUPFAM" id="SSF55347">
    <property type="entry name" value="Glyceraldehyde-3-phosphate dehydrogenase-like, C-terminal domain"/>
    <property type="match status" value="1"/>
</dbReference>
<dbReference type="SUPFAM" id="SSF51735">
    <property type="entry name" value="NAD(P)-binding Rossmann-fold domains"/>
    <property type="match status" value="1"/>
</dbReference>
<dbReference type="PROSITE" id="PS01224">
    <property type="entry name" value="ARGC"/>
    <property type="match status" value="1"/>
</dbReference>
<comment type="function">
    <text evidence="1">Catalyzes the NADPH-dependent reduction of N-acetyl-5-glutamyl phosphate to yield N-acetyl-L-glutamate 5-semialdehyde.</text>
</comment>
<comment type="catalytic activity">
    <reaction evidence="1">
        <text>N-acetyl-L-glutamate 5-semialdehyde + phosphate + NADP(+) = N-acetyl-L-glutamyl 5-phosphate + NADPH + H(+)</text>
        <dbReference type="Rhea" id="RHEA:21588"/>
        <dbReference type="ChEBI" id="CHEBI:15378"/>
        <dbReference type="ChEBI" id="CHEBI:29123"/>
        <dbReference type="ChEBI" id="CHEBI:43474"/>
        <dbReference type="ChEBI" id="CHEBI:57783"/>
        <dbReference type="ChEBI" id="CHEBI:57936"/>
        <dbReference type="ChEBI" id="CHEBI:58349"/>
        <dbReference type="EC" id="1.2.1.38"/>
    </reaction>
</comment>
<comment type="pathway">
    <text evidence="1">Amino-acid biosynthesis; L-arginine biosynthesis; N(2)-acetyl-L-ornithine from L-glutamate: step 3/4.</text>
</comment>
<comment type="subcellular location">
    <subcellularLocation>
        <location evidence="1">Cytoplasm</location>
    </subcellularLocation>
</comment>
<comment type="similarity">
    <text evidence="1">Belongs to the NAGSA dehydrogenase family. Type 1 subfamily.</text>
</comment>
<feature type="chain" id="PRO_1000011021" description="N-acetyl-gamma-glutamyl-phosphate reductase">
    <location>
        <begin position="1"/>
        <end position="352"/>
    </location>
</feature>
<feature type="active site" evidence="1">
    <location>
        <position position="158"/>
    </location>
</feature>
<accession>A1KJ69</accession>
<organism>
    <name type="scientific">Mycobacterium bovis (strain BCG / Pasteur 1173P2)</name>
    <dbReference type="NCBI Taxonomy" id="410289"/>
    <lineage>
        <taxon>Bacteria</taxon>
        <taxon>Bacillati</taxon>
        <taxon>Actinomycetota</taxon>
        <taxon>Actinomycetes</taxon>
        <taxon>Mycobacteriales</taxon>
        <taxon>Mycobacteriaceae</taxon>
        <taxon>Mycobacterium</taxon>
        <taxon>Mycobacterium tuberculosis complex</taxon>
    </lineage>
</organism>
<protein>
    <recommendedName>
        <fullName evidence="1">N-acetyl-gamma-glutamyl-phosphate reductase</fullName>
        <shortName evidence="1">AGPR</shortName>
        <ecNumber evidence="1">1.2.1.38</ecNumber>
    </recommendedName>
    <alternativeName>
        <fullName evidence="1">N-acetyl-glutamate semialdehyde dehydrogenase</fullName>
        <shortName evidence="1">NAGSA dehydrogenase</shortName>
    </alternativeName>
</protein>
<keyword id="KW-0028">Amino-acid biosynthesis</keyword>
<keyword id="KW-0055">Arginine biosynthesis</keyword>
<keyword id="KW-0963">Cytoplasm</keyword>
<keyword id="KW-0521">NADP</keyword>
<keyword id="KW-0560">Oxidoreductase</keyword>
<gene>
    <name evidence="1" type="primary">argC</name>
    <name type="ordered locus">BCG_1691</name>
</gene>
<name>ARGC_MYCBP</name>
<sequence>MQNRQVANATKVAVAGASGYAGGEILRLLLGHPAYADGRLRIGALTAATSAGSTLGEHHPHLTPLAHRVVEPTEAAVLGGHDAVFLALPHGHSAVLAQQLSPETLIIDCGADFRLTDAAVWERFYGSSHAGSWPYGLPELPGARDQLRGTRRIAVPGCYPTAALLALFPALAADLIEPAVTVVAVSGTSGAGRAATTDLLGAEVIGSARAYNIAGVHRHTPEIAQGLRAVTDRDVSVSFTPVLIPASRGILATCTARTRSPLSQLRAAYEKAYHAEPFIYLMPEGQLPRTGAVIGSNAAHIAVAVDEDAQTFVAIAAIDNLVKGTAGAAVQSMNLALGWPETDGLSVVGVAP</sequence>
<reference key="1">
    <citation type="journal article" date="2007" name="Proc. Natl. Acad. Sci. U.S.A.">
        <title>Genome plasticity of BCG and impact on vaccine efficacy.</title>
        <authorList>
            <person name="Brosch R."/>
            <person name="Gordon S.V."/>
            <person name="Garnier T."/>
            <person name="Eiglmeier K."/>
            <person name="Frigui W."/>
            <person name="Valenti P."/>
            <person name="Dos Santos S."/>
            <person name="Duthoy S."/>
            <person name="Lacroix C."/>
            <person name="Garcia-Pelayo C."/>
            <person name="Inwald J.K."/>
            <person name="Golby P."/>
            <person name="Garcia J.N."/>
            <person name="Hewinson R.G."/>
            <person name="Behr M.A."/>
            <person name="Quail M.A."/>
            <person name="Churcher C."/>
            <person name="Barrell B.G."/>
            <person name="Parkhill J."/>
            <person name="Cole S.T."/>
        </authorList>
    </citation>
    <scope>NUCLEOTIDE SEQUENCE [LARGE SCALE GENOMIC DNA]</scope>
    <source>
        <strain>BCG / Pasteur 1173P2</strain>
    </source>
</reference>
<evidence type="ECO:0000255" key="1">
    <source>
        <dbReference type="HAMAP-Rule" id="MF_00150"/>
    </source>
</evidence>
<proteinExistence type="inferred from homology"/>